<feature type="chain" id="PRO_0000223285" description="Serum paraoxonase/arylesterase 2">
    <location>
        <begin position="1"/>
        <end position="354"/>
    </location>
</feature>
<feature type="signal peptide" description="Not cleaved" evidence="2">
    <location>
        <begin position="1"/>
        <end status="unknown"/>
    </location>
</feature>
<feature type="active site" description="Proton acceptor" evidence="1">
    <location>
        <position position="114"/>
    </location>
</feature>
<feature type="binding site" evidence="1">
    <location>
        <position position="53"/>
    </location>
    <ligand>
        <name>Ca(2+)</name>
        <dbReference type="ChEBI" id="CHEBI:29108"/>
        <label>1</label>
        <note>catalytic</note>
    </ligand>
</feature>
<feature type="binding site" evidence="1">
    <location>
        <position position="54"/>
    </location>
    <ligand>
        <name>Ca(2+)</name>
        <dbReference type="ChEBI" id="CHEBI:29108"/>
        <label>2</label>
    </ligand>
</feature>
<feature type="binding site" evidence="1">
    <location>
        <position position="116"/>
    </location>
    <ligand>
        <name>Ca(2+)</name>
        <dbReference type="ChEBI" id="CHEBI:29108"/>
        <label>2</label>
    </ligand>
</feature>
<feature type="binding site" evidence="1">
    <location>
        <position position="167"/>
    </location>
    <ligand>
        <name>Ca(2+)</name>
        <dbReference type="ChEBI" id="CHEBI:29108"/>
        <label>1</label>
        <note>catalytic</note>
    </ligand>
</feature>
<feature type="binding site" evidence="1">
    <location>
        <position position="168"/>
    </location>
    <ligand>
        <name>Ca(2+)</name>
        <dbReference type="ChEBI" id="CHEBI:29108"/>
        <label>2</label>
    </ligand>
</feature>
<feature type="binding site" evidence="1">
    <location>
        <position position="223"/>
    </location>
    <ligand>
        <name>Ca(2+)</name>
        <dbReference type="ChEBI" id="CHEBI:29108"/>
        <label>1</label>
        <note>catalytic</note>
    </ligand>
</feature>
<feature type="binding site" evidence="1">
    <location>
        <position position="268"/>
    </location>
    <ligand>
        <name>Ca(2+)</name>
        <dbReference type="ChEBI" id="CHEBI:29108"/>
        <label>1</label>
        <note>catalytic</note>
    </ligand>
</feature>
<feature type="binding site" evidence="1">
    <location>
        <position position="269"/>
    </location>
    <ligand>
        <name>Ca(2+)</name>
        <dbReference type="ChEBI" id="CHEBI:29108"/>
        <label>1</label>
        <note>catalytic</note>
    </ligand>
</feature>
<feature type="glycosylation site" description="N-linked (GlcNAc...) asparagine" evidence="2">
    <location>
        <position position="254"/>
    </location>
</feature>
<feature type="glycosylation site" description="N-linked (GlcNAc...) asparagine" evidence="2">
    <location>
        <position position="269"/>
    </location>
</feature>
<feature type="glycosylation site" description="N-linked (GlcNAc...) asparagine" evidence="2">
    <location>
        <position position="323"/>
    </location>
</feature>
<feature type="disulfide bond" evidence="1">
    <location>
        <begin position="42"/>
        <end position="352"/>
    </location>
</feature>
<feature type="sequence conflict" description="In Ref. 1; ABU82767." evidence="3" ref="1">
    <original>K</original>
    <variation>R</variation>
    <location>
        <position position="232"/>
    </location>
</feature>
<comment type="function">
    <text evidence="1">Capable of hydrolyzing lactones and a number of aromatic carboxylic acid esters.</text>
</comment>
<comment type="catalytic activity">
    <reaction>
        <text>a phenyl acetate + H2O = a phenol + acetate + H(+)</text>
        <dbReference type="Rhea" id="RHEA:17309"/>
        <dbReference type="ChEBI" id="CHEBI:15377"/>
        <dbReference type="ChEBI" id="CHEBI:15378"/>
        <dbReference type="ChEBI" id="CHEBI:30089"/>
        <dbReference type="ChEBI" id="CHEBI:33853"/>
        <dbReference type="ChEBI" id="CHEBI:140310"/>
        <dbReference type="EC" id="3.1.1.2"/>
    </reaction>
</comment>
<comment type="catalytic activity">
    <reaction>
        <text>an N-acyl-L-homoserine lactone + H2O = an N-acyl-L-homoserine + H(+)</text>
        <dbReference type="Rhea" id="RHEA:22576"/>
        <dbReference type="ChEBI" id="CHEBI:15377"/>
        <dbReference type="ChEBI" id="CHEBI:15378"/>
        <dbReference type="ChEBI" id="CHEBI:55474"/>
        <dbReference type="ChEBI" id="CHEBI:58921"/>
        <dbReference type="EC" id="3.1.1.81"/>
    </reaction>
</comment>
<comment type="cofactor">
    <cofactor evidence="1">
        <name>Ca(2+)</name>
        <dbReference type="ChEBI" id="CHEBI:29108"/>
    </cofactor>
    <text evidence="1">Binds 2 calcium ions per subunit.</text>
</comment>
<comment type="subunit">
    <text evidence="1">Homotrimer.</text>
</comment>
<comment type="subcellular location">
    <subcellularLocation>
        <location evidence="1">Membrane</location>
        <topology evidence="1">Peripheral membrane protein</topology>
    </subcellularLocation>
</comment>
<comment type="PTM">
    <text evidence="1">Glycosylated.</text>
</comment>
<comment type="PTM">
    <text evidence="1">The signal sequence is not cleaved.</text>
</comment>
<comment type="similarity">
    <text evidence="3">Belongs to the paraoxonase family.</text>
</comment>
<evidence type="ECO:0000250" key="1"/>
<evidence type="ECO:0000255" key="2"/>
<evidence type="ECO:0000305" key="3"/>
<name>PON2_BOVIN</name>
<proteinExistence type="evidence at transcript level"/>
<gene>
    <name type="primary">PON2</name>
</gene>
<sequence>MGRLLALSLLGIALALLGERLLALRNRLKASREVESVDLPNCHLIKGIEAGAEDIDILPNGLAFFSVGLKCPGLHSFAPDKPGGILMMDLNEENPRALELRVSRGFNLASFNPHGISTFIDSDDTVYLFVVNHPEFKNTVEIFKFEEEENSLLHLKTIKHELLPSVNDIIAVGPEHFYATNDHYFSDPFLKYLETYLNLHWTNVVYYSPNEVKVVAEGFDSANGINISPDKKYIYVADILAHEIHVLEKHPNMNLTQLKVLKLDTLVDNLSIDPSSGDVLVGCHPNGQKLFVYDPKNPPSSEVLRIQNILSEKPTVTTVYANNGSVLQGSSVASVYDKKLLIGTLYHRALYCEL</sequence>
<dbReference type="EC" id="3.1.1.2"/>
<dbReference type="EC" id="3.1.1.81"/>
<dbReference type="EMBL" id="EF522785">
    <property type="protein sequence ID" value="ABU82767.1"/>
    <property type="molecule type" value="mRNA"/>
</dbReference>
<dbReference type="EMBL" id="BT021520">
    <property type="protein sequence ID" value="AAX46367.1"/>
    <property type="molecule type" value="mRNA"/>
</dbReference>
<dbReference type="EMBL" id="BC118371">
    <property type="protein sequence ID" value="AAI18372.1"/>
    <property type="molecule type" value="mRNA"/>
</dbReference>
<dbReference type="RefSeq" id="NP_001013606.1">
    <property type="nucleotide sequence ID" value="NM_001013588.1"/>
</dbReference>
<dbReference type="SMR" id="Q58DS7"/>
<dbReference type="FunCoup" id="Q58DS7">
    <property type="interactions" value="228"/>
</dbReference>
<dbReference type="STRING" id="9913.ENSBTAP00000011009"/>
<dbReference type="GlyCosmos" id="Q58DS7">
    <property type="glycosylation" value="3 sites, No reported glycans"/>
</dbReference>
<dbReference type="GlyGen" id="Q58DS7">
    <property type="glycosylation" value="3 sites"/>
</dbReference>
<dbReference type="PaxDb" id="9913-ENSBTAP00000011009"/>
<dbReference type="GeneID" id="281417"/>
<dbReference type="KEGG" id="bta:281417"/>
<dbReference type="CTD" id="5445"/>
<dbReference type="VEuPathDB" id="HostDB:ENSBTAG00000008361"/>
<dbReference type="eggNOG" id="ENOG502QUCT">
    <property type="taxonomic scope" value="Eukaryota"/>
</dbReference>
<dbReference type="HOGENOM" id="CLU_049839_0_1_1"/>
<dbReference type="InParanoid" id="Q58DS7"/>
<dbReference type="OMA" id="PDMNLTQ"/>
<dbReference type="OrthoDB" id="423498at2759"/>
<dbReference type="TreeFam" id="TF322436"/>
<dbReference type="Reactome" id="R-BTA-2142688">
    <property type="pathway name" value="Synthesis of 5-eicosatetraenoic acids"/>
</dbReference>
<dbReference type="Proteomes" id="UP000009136">
    <property type="component" value="Chromosome 4"/>
</dbReference>
<dbReference type="Bgee" id="ENSBTAG00000008361">
    <property type="expression patterns" value="Expressed in midbrain and 105 other cell types or tissues"/>
</dbReference>
<dbReference type="GO" id="GO:0005576">
    <property type="term" value="C:extracellular region"/>
    <property type="evidence" value="ECO:0007669"/>
    <property type="project" value="InterPro"/>
</dbReference>
<dbReference type="GO" id="GO:0016020">
    <property type="term" value="C:membrane"/>
    <property type="evidence" value="ECO:0007669"/>
    <property type="project" value="UniProtKB-SubCell"/>
</dbReference>
<dbReference type="GO" id="GO:0102007">
    <property type="term" value="F:acyl-L-homoserine-lactone lactonohydrolase activity"/>
    <property type="evidence" value="ECO:0007669"/>
    <property type="project" value="UniProtKB-EC"/>
</dbReference>
<dbReference type="GO" id="GO:0004064">
    <property type="term" value="F:arylesterase activity"/>
    <property type="evidence" value="ECO:0000318"/>
    <property type="project" value="GO_Central"/>
</dbReference>
<dbReference type="GO" id="GO:0046872">
    <property type="term" value="F:metal ion binding"/>
    <property type="evidence" value="ECO:0007669"/>
    <property type="project" value="UniProtKB-KW"/>
</dbReference>
<dbReference type="GO" id="GO:0009636">
    <property type="term" value="P:response to toxic substance"/>
    <property type="evidence" value="ECO:0000318"/>
    <property type="project" value="GO_Central"/>
</dbReference>
<dbReference type="FunFam" id="2.120.10.30:FF:000023">
    <property type="entry name" value="Serum paraoxonase/arylesterase 2"/>
    <property type="match status" value="1"/>
</dbReference>
<dbReference type="Gene3D" id="2.120.10.30">
    <property type="entry name" value="TolB, C-terminal domain"/>
    <property type="match status" value="1"/>
</dbReference>
<dbReference type="InterPro" id="IPR011042">
    <property type="entry name" value="6-blade_b-propeller_TolB-like"/>
</dbReference>
<dbReference type="InterPro" id="IPR002640">
    <property type="entry name" value="Arylesterase"/>
</dbReference>
<dbReference type="InterPro" id="IPR008364">
    <property type="entry name" value="Paraoxonase2"/>
</dbReference>
<dbReference type="InterPro" id="IPR051288">
    <property type="entry name" value="Serum_paraoxonase/arylesterase"/>
</dbReference>
<dbReference type="PANTHER" id="PTHR11799">
    <property type="entry name" value="PARAOXONASE"/>
    <property type="match status" value="1"/>
</dbReference>
<dbReference type="PANTHER" id="PTHR11799:SF17">
    <property type="entry name" value="SERUM PARAOXONASE_ARYLESTERASE 2"/>
    <property type="match status" value="1"/>
</dbReference>
<dbReference type="Pfam" id="PF01731">
    <property type="entry name" value="Arylesterase"/>
    <property type="match status" value="1"/>
</dbReference>
<dbReference type="PRINTS" id="PR01785">
    <property type="entry name" value="PARAOXONASE"/>
</dbReference>
<dbReference type="PRINTS" id="PR01787">
    <property type="entry name" value="PARAOXONASE2"/>
</dbReference>
<dbReference type="SUPFAM" id="SSF63829">
    <property type="entry name" value="Calcium-dependent phosphotriesterase"/>
    <property type="match status" value="1"/>
</dbReference>
<protein>
    <recommendedName>
        <fullName>Serum paraoxonase/arylesterase 2</fullName>
        <shortName>PON 2</shortName>
        <ecNumber>3.1.1.2</ecNumber>
        <ecNumber>3.1.1.81</ecNumber>
    </recommendedName>
    <alternativeName>
        <fullName>Aromatic esterase 2</fullName>
        <shortName>A-esterase 2</shortName>
    </alternativeName>
    <alternativeName>
        <fullName>Serum aryldialkylphosphatase 2</fullName>
    </alternativeName>
</protein>
<keyword id="KW-0106">Calcium</keyword>
<keyword id="KW-1015">Disulfide bond</keyword>
<keyword id="KW-0325">Glycoprotein</keyword>
<keyword id="KW-0378">Hydrolase</keyword>
<keyword id="KW-0472">Membrane</keyword>
<keyword id="KW-0479">Metal-binding</keyword>
<keyword id="KW-1185">Reference proteome</keyword>
<keyword id="KW-0732">Signal</keyword>
<accession>Q58DS7</accession>
<accession>B2BIS6</accession>
<accession>Q148F7</accession>
<organism>
    <name type="scientific">Bos taurus</name>
    <name type="common">Bovine</name>
    <dbReference type="NCBI Taxonomy" id="9913"/>
    <lineage>
        <taxon>Eukaryota</taxon>
        <taxon>Metazoa</taxon>
        <taxon>Chordata</taxon>
        <taxon>Craniata</taxon>
        <taxon>Vertebrata</taxon>
        <taxon>Euteleostomi</taxon>
        <taxon>Mammalia</taxon>
        <taxon>Eutheria</taxon>
        <taxon>Laurasiatheria</taxon>
        <taxon>Artiodactyla</taxon>
        <taxon>Ruminantia</taxon>
        <taxon>Pecora</taxon>
        <taxon>Bovidae</taxon>
        <taxon>Bovinae</taxon>
        <taxon>Bos</taxon>
    </lineage>
</organism>
<reference key="1">
    <citation type="submission" date="2007-03" db="EMBL/GenBank/DDBJ databases">
        <title>Pon2 gene clone, expression in tissues, bioinformatics and polymorphism analysis of cattle.</title>
        <authorList>
            <person name="Ji A."/>
            <person name="Xu S."/>
            <person name="Gao X."/>
            <person name="Zhou Z."/>
            <person name="Huai Y."/>
        </authorList>
    </citation>
    <scope>NUCLEOTIDE SEQUENCE [MRNA]</scope>
    <source>
        <strain>Charolais X Fuzhou</strain>
        <tissue>Sperm</tissue>
    </source>
</reference>
<reference key="2">
    <citation type="journal article" date="2005" name="BMC Genomics">
        <title>Characterization of 954 bovine full-CDS cDNA sequences.</title>
        <authorList>
            <person name="Harhay G.P."/>
            <person name="Sonstegard T.S."/>
            <person name="Keele J.W."/>
            <person name="Heaton M.P."/>
            <person name="Clawson M.L."/>
            <person name="Snelling W.M."/>
            <person name="Wiedmann R.T."/>
            <person name="Van Tassell C.P."/>
            <person name="Smith T.P.L."/>
        </authorList>
    </citation>
    <scope>NUCLEOTIDE SEQUENCE [LARGE SCALE MRNA]</scope>
</reference>
<reference key="3">
    <citation type="submission" date="2006-06" db="EMBL/GenBank/DDBJ databases">
        <authorList>
            <consortium name="NIH - Mammalian Gene Collection (MGC) project"/>
        </authorList>
    </citation>
    <scope>NUCLEOTIDE SEQUENCE [LARGE SCALE MRNA]</scope>
    <source>
        <strain>Hereford</strain>
        <tissue>Fetal pons</tissue>
    </source>
</reference>